<sequence length="501" mass="55664">MNRRQVLAALAAIPLLPEAFPANAQAPQKPAAFDPSVVRQIARQLASKPYQAPDTKLPSALADLDYDAYRAIRFNPERALWRGDQLPFQVQFFHRGLFYKNAVTIYEVANGKAQQIRYRSDDFSFGATPAPPPDADLGFAGFRIHAPINKPDYYDEVSVFLGATYFRAVAKGQHYGLSARGLSIDTGQSGGEEFPLFTAFWLERPAPEASSMVVHALLDSKSVAGAYRFTIRPGDTTVFDVEMALYPRADLEHAGLSPMTSMFFFGPNDPSDAADFRPEVHDSDGLAIFNGRGEQLWRPLANPRDLQISAFADLNPRGIGLMQRERQFQAYQDLESRFGLRPSLWAEPIGDWGEGVVQLIEIPTKEEVHDNIAAFWTPKTPLKAKGEHIYTYRLHWGPDTPKPSSLARFSRTGISVRGDHRLFVLDITGDILKSVDAGAVRGVVSADKGEIRNVVTQPNPETGGWRLSFDLTPETPAAELRASLWGGDKALSEVWVYRWTL</sequence>
<proteinExistence type="inferred from homology"/>
<comment type="function">
    <text evidence="1">Involved in the biosynthesis of osmoregulated periplasmic glucans (OPGs).</text>
</comment>
<comment type="pathway">
    <text evidence="1">Glycan metabolism; osmoregulated periplasmic glucan (OPG) biosynthesis.</text>
</comment>
<comment type="subcellular location">
    <subcellularLocation>
        <location evidence="1">Periplasm</location>
    </subcellularLocation>
</comment>
<comment type="similarity">
    <text evidence="1">Belongs to the OpgD/OpgG family.</text>
</comment>
<gene>
    <name evidence="1" type="primary">opgG</name>
    <name type="ordered locus">RPE_0902</name>
</gene>
<keyword id="KW-0574">Periplasm</keyword>
<keyword id="KW-0732">Signal</keyword>
<accession>Q07T76</accession>
<dbReference type="EMBL" id="CP000463">
    <property type="protein sequence ID" value="ABJ04858.1"/>
    <property type="molecule type" value="Genomic_DNA"/>
</dbReference>
<dbReference type="SMR" id="Q07T76"/>
<dbReference type="STRING" id="316055.RPE_0902"/>
<dbReference type="KEGG" id="rpe:RPE_0902"/>
<dbReference type="eggNOG" id="COG3131">
    <property type="taxonomic scope" value="Bacteria"/>
</dbReference>
<dbReference type="HOGENOM" id="CLU_023403_2_0_5"/>
<dbReference type="OrthoDB" id="9777817at2"/>
<dbReference type="UniPathway" id="UPA00637"/>
<dbReference type="GO" id="GO:0030288">
    <property type="term" value="C:outer membrane-bounded periplasmic space"/>
    <property type="evidence" value="ECO:0007669"/>
    <property type="project" value="TreeGrafter"/>
</dbReference>
<dbReference type="GO" id="GO:0030246">
    <property type="term" value="F:carbohydrate binding"/>
    <property type="evidence" value="ECO:0007669"/>
    <property type="project" value="InterPro"/>
</dbReference>
<dbReference type="GO" id="GO:0003824">
    <property type="term" value="F:catalytic activity"/>
    <property type="evidence" value="ECO:0007669"/>
    <property type="project" value="InterPro"/>
</dbReference>
<dbReference type="GO" id="GO:0051274">
    <property type="term" value="P:beta-glucan biosynthetic process"/>
    <property type="evidence" value="ECO:0007669"/>
    <property type="project" value="TreeGrafter"/>
</dbReference>
<dbReference type="FunFam" id="2.70.98.10:FF:000001">
    <property type="entry name" value="Glucans biosynthesis protein G"/>
    <property type="match status" value="1"/>
</dbReference>
<dbReference type="Gene3D" id="2.70.98.10">
    <property type="match status" value="1"/>
</dbReference>
<dbReference type="Gene3D" id="2.60.40.10">
    <property type="entry name" value="Immunoglobulins"/>
    <property type="match status" value="1"/>
</dbReference>
<dbReference type="HAMAP" id="MF_01069">
    <property type="entry name" value="MdoG_OpgG"/>
    <property type="match status" value="1"/>
</dbReference>
<dbReference type="InterPro" id="IPR011013">
    <property type="entry name" value="Gal_mutarotase_sf_dom"/>
</dbReference>
<dbReference type="InterPro" id="IPR014718">
    <property type="entry name" value="GH-type_carb-bd"/>
</dbReference>
<dbReference type="InterPro" id="IPR014438">
    <property type="entry name" value="Glucan_biosyn_MdoG/MdoD"/>
</dbReference>
<dbReference type="InterPro" id="IPR007444">
    <property type="entry name" value="Glucan_biosyn_MdoG_C"/>
</dbReference>
<dbReference type="InterPro" id="IPR013783">
    <property type="entry name" value="Ig-like_fold"/>
</dbReference>
<dbReference type="InterPro" id="IPR014756">
    <property type="entry name" value="Ig_E-set"/>
</dbReference>
<dbReference type="InterPro" id="IPR023704">
    <property type="entry name" value="MdoG_OpgG"/>
</dbReference>
<dbReference type="PANTHER" id="PTHR30504">
    <property type="entry name" value="GLUCANS BIOSYNTHESIS PROTEIN"/>
    <property type="match status" value="1"/>
</dbReference>
<dbReference type="PANTHER" id="PTHR30504:SF2">
    <property type="entry name" value="GLUCANS BIOSYNTHESIS PROTEIN G"/>
    <property type="match status" value="1"/>
</dbReference>
<dbReference type="Pfam" id="PF04349">
    <property type="entry name" value="MdoG"/>
    <property type="match status" value="1"/>
</dbReference>
<dbReference type="PIRSF" id="PIRSF006281">
    <property type="entry name" value="MdoG"/>
    <property type="match status" value="1"/>
</dbReference>
<dbReference type="SUPFAM" id="SSF81296">
    <property type="entry name" value="E set domains"/>
    <property type="match status" value="1"/>
</dbReference>
<dbReference type="SUPFAM" id="SSF74650">
    <property type="entry name" value="Galactose mutarotase-like"/>
    <property type="match status" value="1"/>
</dbReference>
<organism>
    <name type="scientific">Rhodopseudomonas palustris (strain BisA53)</name>
    <dbReference type="NCBI Taxonomy" id="316055"/>
    <lineage>
        <taxon>Bacteria</taxon>
        <taxon>Pseudomonadati</taxon>
        <taxon>Pseudomonadota</taxon>
        <taxon>Alphaproteobacteria</taxon>
        <taxon>Hyphomicrobiales</taxon>
        <taxon>Nitrobacteraceae</taxon>
        <taxon>Rhodopseudomonas</taxon>
    </lineage>
</organism>
<reference key="1">
    <citation type="submission" date="2006-09" db="EMBL/GenBank/DDBJ databases">
        <title>Complete sequence of Rhodopseudomonas palustris BisA53.</title>
        <authorList>
            <consortium name="US DOE Joint Genome Institute"/>
            <person name="Copeland A."/>
            <person name="Lucas S."/>
            <person name="Lapidus A."/>
            <person name="Barry K."/>
            <person name="Detter J.C."/>
            <person name="Glavina del Rio T."/>
            <person name="Hammon N."/>
            <person name="Israni S."/>
            <person name="Dalin E."/>
            <person name="Tice H."/>
            <person name="Pitluck S."/>
            <person name="Chain P."/>
            <person name="Malfatti S."/>
            <person name="Shin M."/>
            <person name="Vergez L."/>
            <person name="Schmutz J."/>
            <person name="Larimer F."/>
            <person name="Land M."/>
            <person name="Hauser L."/>
            <person name="Pelletier D.A."/>
            <person name="Kyrpides N."/>
            <person name="Kim E."/>
            <person name="Harwood C.S."/>
            <person name="Oda Y."/>
            <person name="Richardson P."/>
        </authorList>
    </citation>
    <scope>NUCLEOTIDE SEQUENCE [LARGE SCALE GENOMIC DNA]</scope>
    <source>
        <strain>BisA53</strain>
    </source>
</reference>
<feature type="signal peptide" evidence="1">
    <location>
        <begin position="1"/>
        <end position="24"/>
    </location>
</feature>
<feature type="chain" id="PRO_5000133295" description="Glucans biosynthesis protein G">
    <location>
        <begin position="25"/>
        <end position="501"/>
    </location>
</feature>
<name>OPGG_RHOP5</name>
<evidence type="ECO:0000255" key="1">
    <source>
        <dbReference type="HAMAP-Rule" id="MF_01069"/>
    </source>
</evidence>
<protein>
    <recommendedName>
        <fullName evidence="1">Glucans biosynthesis protein G</fullName>
    </recommendedName>
</protein>